<evidence type="ECO:0000255" key="1">
    <source>
        <dbReference type="HAMAP-Rule" id="MF_00580"/>
    </source>
</evidence>
<keyword id="KW-0143">Chaperone</keyword>
<keyword id="KW-0963">Cytoplasm</keyword>
<dbReference type="EMBL" id="CP001161">
    <property type="protein sequence ID" value="ACL30403.1"/>
    <property type="molecule type" value="Genomic_DNA"/>
</dbReference>
<dbReference type="RefSeq" id="WP_009873979.1">
    <property type="nucleotide sequence ID" value="NC_011833.1"/>
</dbReference>
<dbReference type="SMR" id="B8D8I1"/>
<dbReference type="KEGG" id="bap:BUAP5A_018"/>
<dbReference type="HOGENOM" id="CLU_132825_1_1_6"/>
<dbReference type="OrthoDB" id="9806791at2"/>
<dbReference type="Proteomes" id="UP000006904">
    <property type="component" value="Chromosome"/>
</dbReference>
<dbReference type="GO" id="GO:0005737">
    <property type="term" value="C:cytoplasm"/>
    <property type="evidence" value="ECO:0007669"/>
    <property type="project" value="UniProtKB-SubCell"/>
</dbReference>
<dbReference type="GO" id="GO:0005524">
    <property type="term" value="F:ATP binding"/>
    <property type="evidence" value="ECO:0007669"/>
    <property type="project" value="InterPro"/>
</dbReference>
<dbReference type="GO" id="GO:0046872">
    <property type="term" value="F:metal ion binding"/>
    <property type="evidence" value="ECO:0007669"/>
    <property type="project" value="TreeGrafter"/>
</dbReference>
<dbReference type="GO" id="GO:0044183">
    <property type="term" value="F:protein folding chaperone"/>
    <property type="evidence" value="ECO:0007669"/>
    <property type="project" value="InterPro"/>
</dbReference>
<dbReference type="GO" id="GO:0051087">
    <property type="term" value="F:protein-folding chaperone binding"/>
    <property type="evidence" value="ECO:0007669"/>
    <property type="project" value="TreeGrafter"/>
</dbReference>
<dbReference type="GO" id="GO:0051082">
    <property type="term" value="F:unfolded protein binding"/>
    <property type="evidence" value="ECO:0007669"/>
    <property type="project" value="TreeGrafter"/>
</dbReference>
<dbReference type="GO" id="GO:0051085">
    <property type="term" value="P:chaperone cofactor-dependent protein refolding"/>
    <property type="evidence" value="ECO:0007669"/>
    <property type="project" value="TreeGrafter"/>
</dbReference>
<dbReference type="CDD" id="cd00320">
    <property type="entry name" value="cpn10"/>
    <property type="match status" value="1"/>
</dbReference>
<dbReference type="FunFam" id="2.30.33.40:FF:000001">
    <property type="entry name" value="10 kDa chaperonin"/>
    <property type="match status" value="1"/>
</dbReference>
<dbReference type="Gene3D" id="2.30.33.40">
    <property type="entry name" value="GroES chaperonin"/>
    <property type="match status" value="1"/>
</dbReference>
<dbReference type="HAMAP" id="MF_00580">
    <property type="entry name" value="CH10"/>
    <property type="match status" value="1"/>
</dbReference>
<dbReference type="InterPro" id="IPR020818">
    <property type="entry name" value="Chaperonin_GroES"/>
</dbReference>
<dbReference type="InterPro" id="IPR037124">
    <property type="entry name" value="Chaperonin_GroES_sf"/>
</dbReference>
<dbReference type="InterPro" id="IPR018369">
    <property type="entry name" value="Chaprnonin_Cpn10_CS"/>
</dbReference>
<dbReference type="InterPro" id="IPR011032">
    <property type="entry name" value="GroES-like_sf"/>
</dbReference>
<dbReference type="NCBIfam" id="NF001526">
    <property type="entry name" value="PRK00364.1-1"/>
    <property type="match status" value="1"/>
</dbReference>
<dbReference type="NCBIfam" id="NF001531">
    <property type="entry name" value="PRK00364.2-2"/>
    <property type="match status" value="1"/>
</dbReference>
<dbReference type="PANTHER" id="PTHR10772">
    <property type="entry name" value="10 KDA HEAT SHOCK PROTEIN"/>
    <property type="match status" value="1"/>
</dbReference>
<dbReference type="PANTHER" id="PTHR10772:SF58">
    <property type="entry name" value="CO-CHAPERONIN GROES"/>
    <property type="match status" value="1"/>
</dbReference>
<dbReference type="Pfam" id="PF00166">
    <property type="entry name" value="Cpn10"/>
    <property type="match status" value="1"/>
</dbReference>
<dbReference type="PRINTS" id="PR00297">
    <property type="entry name" value="CHAPERONIN10"/>
</dbReference>
<dbReference type="SMART" id="SM00883">
    <property type="entry name" value="Cpn10"/>
    <property type="match status" value="1"/>
</dbReference>
<dbReference type="SUPFAM" id="SSF50129">
    <property type="entry name" value="GroES-like"/>
    <property type="match status" value="1"/>
</dbReference>
<dbReference type="PROSITE" id="PS00681">
    <property type="entry name" value="CHAPERONINS_CPN10"/>
    <property type="match status" value="1"/>
</dbReference>
<accession>B8D8I1</accession>
<sequence>MKIRPLHDRVLVKRQEVESKSAGGIVLTGSAAGKSTRGTVTAVGKGRVLDNGDIKPLDVKVGDVVIFNEGYGAKTEKIDNEELLILTESDILAIVE</sequence>
<name>CH10_BUCA5</name>
<gene>
    <name evidence="1" type="primary">groES</name>
    <name evidence="1" type="synonym">groS</name>
    <name type="ordered locus">BUAP5A_018</name>
</gene>
<feature type="chain" id="PRO_1000146892" description="Co-chaperonin GroES">
    <location>
        <begin position="1"/>
        <end position="96"/>
    </location>
</feature>
<comment type="function">
    <text evidence="1">Together with the chaperonin GroEL, plays an essential role in assisting protein folding. The GroEL-GroES system forms a nano-cage that allows encapsulation of the non-native substrate proteins and provides a physical environment optimized to promote and accelerate protein folding. GroES binds to the apical surface of the GroEL ring, thereby capping the opening of the GroEL channel.</text>
</comment>
<comment type="subunit">
    <text evidence="1">Heptamer of 7 subunits arranged in a ring. Interacts with the chaperonin GroEL.</text>
</comment>
<comment type="subcellular location">
    <subcellularLocation>
        <location evidence="1">Cytoplasm</location>
    </subcellularLocation>
</comment>
<comment type="similarity">
    <text evidence="1">Belongs to the GroES chaperonin family.</text>
</comment>
<proteinExistence type="inferred from homology"/>
<reference key="1">
    <citation type="journal article" date="2009" name="Science">
        <title>The dynamics and time scale of ongoing genomic erosion in symbiotic bacteria.</title>
        <authorList>
            <person name="Moran N.A."/>
            <person name="McLaughlin H.J."/>
            <person name="Sorek R."/>
        </authorList>
    </citation>
    <scope>NUCLEOTIDE SEQUENCE [LARGE SCALE GENOMIC DNA]</scope>
    <source>
        <strain>5A</strain>
    </source>
</reference>
<organism>
    <name type="scientific">Buchnera aphidicola subsp. Acyrthosiphon pisum (strain 5A)</name>
    <dbReference type="NCBI Taxonomy" id="563178"/>
    <lineage>
        <taxon>Bacteria</taxon>
        <taxon>Pseudomonadati</taxon>
        <taxon>Pseudomonadota</taxon>
        <taxon>Gammaproteobacteria</taxon>
        <taxon>Enterobacterales</taxon>
        <taxon>Erwiniaceae</taxon>
        <taxon>Buchnera</taxon>
    </lineage>
</organism>
<protein>
    <recommendedName>
        <fullName evidence="1">Co-chaperonin GroES</fullName>
    </recommendedName>
    <alternativeName>
        <fullName evidence="1">10 kDa chaperonin</fullName>
    </alternativeName>
    <alternativeName>
        <fullName evidence="1">Chaperonin-10</fullName>
        <shortName evidence="1">Cpn10</shortName>
    </alternativeName>
</protein>